<accession>B0RUK2</accession>
<sequence>MKLCDFEVGLDQPLFLIAGPCVIESMQLQLDVAGKLKEITGKLGINFIFKSSFDKANRTSGTSFRGPGLEEGLKVLDAVKKQIGVPVLTDVHEYTPMNEVAAVVDVLQTPAFLVRQTDFIKNVCAAGKPVNIKKGQFLAPWDMKPVVDKAKSTGNEQIMVCERGASFGYNNLVSDMRSLSVMRDTGCPVVFDATHSVQLPGGQGSSSGGQREFVPVLARAAVAVGISGLFAETHPDPSKALSDGPNAWPLDRMEELLETLMELDAVTKKHGFARFA</sequence>
<gene>
    <name evidence="1" type="primary">kdsA</name>
    <name type="ordered locus">xcc-b100_2561</name>
</gene>
<proteinExistence type="inferred from homology"/>
<keyword id="KW-0963">Cytoplasm</keyword>
<keyword id="KW-0448">Lipopolysaccharide biosynthesis</keyword>
<keyword id="KW-0808">Transferase</keyword>
<dbReference type="EC" id="2.5.1.55" evidence="1"/>
<dbReference type="EMBL" id="AM920689">
    <property type="protein sequence ID" value="CAP51921.1"/>
    <property type="molecule type" value="Genomic_DNA"/>
</dbReference>
<dbReference type="SMR" id="B0RUK2"/>
<dbReference type="KEGG" id="xca:xcc-b100_2561"/>
<dbReference type="HOGENOM" id="CLU_036666_0_0_6"/>
<dbReference type="UniPathway" id="UPA00030"/>
<dbReference type="UniPathway" id="UPA00357">
    <property type="reaction ID" value="UER00474"/>
</dbReference>
<dbReference type="Proteomes" id="UP000001188">
    <property type="component" value="Chromosome"/>
</dbReference>
<dbReference type="GO" id="GO:0005737">
    <property type="term" value="C:cytoplasm"/>
    <property type="evidence" value="ECO:0007669"/>
    <property type="project" value="UniProtKB-SubCell"/>
</dbReference>
<dbReference type="GO" id="GO:0008676">
    <property type="term" value="F:3-deoxy-8-phosphooctulonate synthase activity"/>
    <property type="evidence" value="ECO:0007669"/>
    <property type="project" value="UniProtKB-UniRule"/>
</dbReference>
<dbReference type="GO" id="GO:0019294">
    <property type="term" value="P:keto-3-deoxy-D-manno-octulosonic acid biosynthetic process"/>
    <property type="evidence" value="ECO:0007669"/>
    <property type="project" value="UniProtKB-UniRule"/>
</dbReference>
<dbReference type="Gene3D" id="3.20.20.70">
    <property type="entry name" value="Aldolase class I"/>
    <property type="match status" value="1"/>
</dbReference>
<dbReference type="HAMAP" id="MF_00056">
    <property type="entry name" value="KDO8P_synth"/>
    <property type="match status" value="1"/>
</dbReference>
<dbReference type="InterPro" id="IPR013785">
    <property type="entry name" value="Aldolase_TIM"/>
</dbReference>
<dbReference type="InterPro" id="IPR006218">
    <property type="entry name" value="DAHP1/KDSA"/>
</dbReference>
<dbReference type="InterPro" id="IPR006269">
    <property type="entry name" value="KDO8P_synthase"/>
</dbReference>
<dbReference type="NCBIfam" id="TIGR01362">
    <property type="entry name" value="KDO8P_synth"/>
    <property type="match status" value="1"/>
</dbReference>
<dbReference type="NCBIfam" id="NF003543">
    <property type="entry name" value="PRK05198.1"/>
    <property type="match status" value="1"/>
</dbReference>
<dbReference type="PANTHER" id="PTHR21057">
    <property type="entry name" value="PHOSPHO-2-DEHYDRO-3-DEOXYHEPTONATE ALDOLASE"/>
    <property type="match status" value="1"/>
</dbReference>
<dbReference type="Pfam" id="PF00793">
    <property type="entry name" value="DAHP_synth_1"/>
    <property type="match status" value="1"/>
</dbReference>
<dbReference type="SUPFAM" id="SSF51569">
    <property type="entry name" value="Aldolase"/>
    <property type="match status" value="1"/>
</dbReference>
<reference key="1">
    <citation type="journal article" date="2008" name="J. Biotechnol.">
        <title>The genome of Xanthomonas campestris pv. campestris B100 and its use for the reconstruction of metabolic pathways involved in xanthan biosynthesis.</title>
        <authorList>
            <person name="Vorhoelter F.-J."/>
            <person name="Schneiker S."/>
            <person name="Goesmann A."/>
            <person name="Krause L."/>
            <person name="Bekel T."/>
            <person name="Kaiser O."/>
            <person name="Linke B."/>
            <person name="Patschkowski T."/>
            <person name="Rueckert C."/>
            <person name="Schmid J."/>
            <person name="Sidhu V.K."/>
            <person name="Sieber V."/>
            <person name="Tauch A."/>
            <person name="Watt S.A."/>
            <person name="Weisshaar B."/>
            <person name="Becker A."/>
            <person name="Niehaus K."/>
            <person name="Puehler A."/>
        </authorList>
    </citation>
    <scope>NUCLEOTIDE SEQUENCE [LARGE SCALE GENOMIC DNA]</scope>
    <source>
        <strain>B100</strain>
    </source>
</reference>
<name>KDSA_XANCB</name>
<feature type="chain" id="PRO_1000091842" description="2-dehydro-3-deoxyphosphooctonate aldolase">
    <location>
        <begin position="1"/>
        <end position="276"/>
    </location>
</feature>
<protein>
    <recommendedName>
        <fullName evidence="1">2-dehydro-3-deoxyphosphooctonate aldolase</fullName>
        <ecNumber evidence="1">2.5.1.55</ecNumber>
    </recommendedName>
    <alternativeName>
        <fullName evidence="1">3-deoxy-D-manno-octulosonic acid 8-phosphate synthase</fullName>
    </alternativeName>
    <alternativeName>
        <fullName evidence="1">KDO-8-phosphate synthase</fullName>
        <shortName evidence="1">KDO 8-P synthase</shortName>
        <shortName evidence="1">KDOPS</shortName>
    </alternativeName>
    <alternativeName>
        <fullName evidence="1">Phospho-2-dehydro-3-deoxyoctonate aldolase</fullName>
    </alternativeName>
</protein>
<evidence type="ECO:0000255" key="1">
    <source>
        <dbReference type="HAMAP-Rule" id="MF_00056"/>
    </source>
</evidence>
<organism>
    <name type="scientific">Xanthomonas campestris pv. campestris (strain B100)</name>
    <dbReference type="NCBI Taxonomy" id="509169"/>
    <lineage>
        <taxon>Bacteria</taxon>
        <taxon>Pseudomonadati</taxon>
        <taxon>Pseudomonadota</taxon>
        <taxon>Gammaproteobacteria</taxon>
        <taxon>Lysobacterales</taxon>
        <taxon>Lysobacteraceae</taxon>
        <taxon>Xanthomonas</taxon>
    </lineage>
</organism>
<comment type="catalytic activity">
    <reaction evidence="1">
        <text>D-arabinose 5-phosphate + phosphoenolpyruvate + H2O = 3-deoxy-alpha-D-manno-2-octulosonate-8-phosphate + phosphate</text>
        <dbReference type="Rhea" id="RHEA:14053"/>
        <dbReference type="ChEBI" id="CHEBI:15377"/>
        <dbReference type="ChEBI" id="CHEBI:43474"/>
        <dbReference type="ChEBI" id="CHEBI:57693"/>
        <dbReference type="ChEBI" id="CHEBI:58702"/>
        <dbReference type="ChEBI" id="CHEBI:85985"/>
        <dbReference type="EC" id="2.5.1.55"/>
    </reaction>
</comment>
<comment type="pathway">
    <text evidence="1">Carbohydrate biosynthesis; 3-deoxy-D-manno-octulosonate biosynthesis; 3-deoxy-D-manno-octulosonate from D-ribulose 5-phosphate: step 2/3.</text>
</comment>
<comment type="pathway">
    <text evidence="1">Bacterial outer membrane biogenesis; lipopolysaccharide biosynthesis.</text>
</comment>
<comment type="subcellular location">
    <subcellularLocation>
        <location evidence="1">Cytoplasm</location>
    </subcellularLocation>
</comment>
<comment type="similarity">
    <text evidence="1">Belongs to the KdsA family.</text>
</comment>